<protein>
    <recommendedName>
        <fullName evidence="2">Elongation factor Tu</fullName>
        <shortName evidence="2">EF-Tu</shortName>
        <ecNumber evidence="2">3.6.5.3</ecNumber>
    </recommendedName>
</protein>
<accession>A4VTQ7</accession>
<evidence type="ECO:0000250" key="1"/>
<evidence type="ECO:0000255" key="2">
    <source>
        <dbReference type="HAMAP-Rule" id="MF_00118"/>
    </source>
</evidence>
<evidence type="ECO:0000305" key="3"/>
<proteinExistence type="inferred from homology"/>
<name>EFTU_STRSY</name>
<gene>
    <name evidence="2" type="primary">tuf</name>
    <name type="ordered locus">SSU05_0530</name>
</gene>
<comment type="function">
    <text evidence="2">GTP hydrolase that promotes the GTP-dependent binding of aminoacyl-tRNA to the A-site of ribosomes during protein biosynthesis.</text>
</comment>
<comment type="catalytic activity">
    <reaction evidence="2">
        <text>GTP + H2O = GDP + phosphate + H(+)</text>
        <dbReference type="Rhea" id="RHEA:19669"/>
        <dbReference type="ChEBI" id="CHEBI:15377"/>
        <dbReference type="ChEBI" id="CHEBI:15378"/>
        <dbReference type="ChEBI" id="CHEBI:37565"/>
        <dbReference type="ChEBI" id="CHEBI:43474"/>
        <dbReference type="ChEBI" id="CHEBI:58189"/>
        <dbReference type="EC" id="3.6.5.3"/>
    </reaction>
    <physiologicalReaction direction="left-to-right" evidence="2">
        <dbReference type="Rhea" id="RHEA:19670"/>
    </physiologicalReaction>
</comment>
<comment type="subunit">
    <text evidence="2">Monomer.</text>
</comment>
<comment type="subcellular location">
    <subcellularLocation>
        <location evidence="2">Cytoplasm</location>
    </subcellularLocation>
</comment>
<comment type="similarity">
    <text evidence="2">Belongs to the TRAFAC class translation factor GTPase superfamily. Classic translation factor GTPase family. EF-Tu/EF-1A subfamily.</text>
</comment>
<comment type="sequence caution" evidence="3">
    <conflict type="erroneous initiation">
        <sequence resource="EMBL-CDS" id="ABP89496"/>
    </conflict>
</comment>
<feature type="chain" id="PRO_0000337555" description="Elongation factor Tu">
    <location>
        <begin position="1"/>
        <end position="398"/>
    </location>
</feature>
<feature type="domain" description="tr-type G">
    <location>
        <begin position="10"/>
        <end position="207"/>
    </location>
</feature>
<feature type="region of interest" description="G1" evidence="1">
    <location>
        <begin position="19"/>
        <end position="26"/>
    </location>
</feature>
<feature type="region of interest" description="G2" evidence="1">
    <location>
        <begin position="63"/>
        <end position="67"/>
    </location>
</feature>
<feature type="region of interest" description="G3" evidence="1">
    <location>
        <begin position="84"/>
        <end position="87"/>
    </location>
</feature>
<feature type="region of interest" description="G4" evidence="1">
    <location>
        <begin position="139"/>
        <end position="142"/>
    </location>
</feature>
<feature type="region of interest" description="G5" evidence="1">
    <location>
        <begin position="177"/>
        <end position="179"/>
    </location>
</feature>
<feature type="binding site" evidence="2">
    <location>
        <begin position="19"/>
        <end position="26"/>
    </location>
    <ligand>
        <name>GTP</name>
        <dbReference type="ChEBI" id="CHEBI:37565"/>
    </ligand>
</feature>
<feature type="binding site" evidence="2">
    <location>
        <position position="26"/>
    </location>
    <ligand>
        <name>Mg(2+)</name>
        <dbReference type="ChEBI" id="CHEBI:18420"/>
    </ligand>
</feature>
<feature type="binding site" evidence="2">
    <location>
        <begin position="84"/>
        <end position="88"/>
    </location>
    <ligand>
        <name>GTP</name>
        <dbReference type="ChEBI" id="CHEBI:37565"/>
    </ligand>
</feature>
<feature type="binding site" evidence="2">
    <location>
        <begin position="139"/>
        <end position="142"/>
    </location>
    <ligand>
        <name>GTP</name>
        <dbReference type="ChEBI" id="CHEBI:37565"/>
    </ligand>
</feature>
<dbReference type="EC" id="3.6.5.3" evidence="2"/>
<dbReference type="EMBL" id="CP000407">
    <property type="protein sequence ID" value="ABP89496.1"/>
    <property type="status" value="ALT_INIT"/>
    <property type="molecule type" value="Genomic_DNA"/>
</dbReference>
<dbReference type="SMR" id="A4VTQ7"/>
<dbReference type="STRING" id="391295.SSU05_0530"/>
<dbReference type="KEGG" id="ssu:SSU05_0530"/>
<dbReference type="eggNOG" id="COG0050">
    <property type="taxonomic scope" value="Bacteria"/>
</dbReference>
<dbReference type="HOGENOM" id="CLU_007265_0_1_9"/>
<dbReference type="GO" id="GO:0005829">
    <property type="term" value="C:cytosol"/>
    <property type="evidence" value="ECO:0007669"/>
    <property type="project" value="TreeGrafter"/>
</dbReference>
<dbReference type="GO" id="GO:0005525">
    <property type="term" value="F:GTP binding"/>
    <property type="evidence" value="ECO:0007669"/>
    <property type="project" value="UniProtKB-UniRule"/>
</dbReference>
<dbReference type="GO" id="GO:0003924">
    <property type="term" value="F:GTPase activity"/>
    <property type="evidence" value="ECO:0007669"/>
    <property type="project" value="InterPro"/>
</dbReference>
<dbReference type="GO" id="GO:0003746">
    <property type="term" value="F:translation elongation factor activity"/>
    <property type="evidence" value="ECO:0007669"/>
    <property type="project" value="UniProtKB-UniRule"/>
</dbReference>
<dbReference type="CDD" id="cd01884">
    <property type="entry name" value="EF_Tu"/>
    <property type="match status" value="1"/>
</dbReference>
<dbReference type="CDD" id="cd03697">
    <property type="entry name" value="EFTU_II"/>
    <property type="match status" value="1"/>
</dbReference>
<dbReference type="CDD" id="cd03707">
    <property type="entry name" value="EFTU_III"/>
    <property type="match status" value="1"/>
</dbReference>
<dbReference type="FunFam" id="2.40.30.10:FF:000001">
    <property type="entry name" value="Elongation factor Tu"/>
    <property type="match status" value="1"/>
</dbReference>
<dbReference type="FunFam" id="3.40.50.300:FF:000003">
    <property type="entry name" value="Elongation factor Tu"/>
    <property type="match status" value="1"/>
</dbReference>
<dbReference type="Gene3D" id="3.40.50.300">
    <property type="entry name" value="P-loop containing nucleotide triphosphate hydrolases"/>
    <property type="match status" value="1"/>
</dbReference>
<dbReference type="Gene3D" id="2.40.30.10">
    <property type="entry name" value="Translation factors"/>
    <property type="match status" value="2"/>
</dbReference>
<dbReference type="HAMAP" id="MF_00118_B">
    <property type="entry name" value="EF_Tu_B"/>
    <property type="match status" value="1"/>
</dbReference>
<dbReference type="InterPro" id="IPR041709">
    <property type="entry name" value="EF-Tu_GTP-bd"/>
</dbReference>
<dbReference type="InterPro" id="IPR050055">
    <property type="entry name" value="EF-Tu_GTPase"/>
</dbReference>
<dbReference type="InterPro" id="IPR004161">
    <property type="entry name" value="EFTu-like_2"/>
</dbReference>
<dbReference type="InterPro" id="IPR033720">
    <property type="entry name" value="EFTU_2"/>
</dbReference>
<dbReference type="InterPro" id="IPR031157">
    <property type="entry name" value="G_TR_CS"/>
</dbReference>
<dbReference type="InterPro" id="IPR027417">
    <property type="entry name" value="P-loop_NTPase"/>
</dbReference>
<dbReference type="InterPro" id="IPR005225">
    <property type="entry name" value="Small_GTP-bd"/>
</dbReference>
<dbReference type="InterPro" id="IPR000795">
    <property type="entry name" value="T_Tr_GTP-bd_dom"/>
</dbReference>
<dbReference type="InterPro" id="IPR009000">
    <property type="entry name" value="Transl_B-barrel_sf"/>
</dbReference>
<dbReference type="InterPro" id="IPR009001">
    <property type="entry name" value="Transl_elong_EF1A/Init_IF2_C"/>
</dbReference>
<dbReference type="InterPro" id="IPR004541">
    <property type="entry name" value="Transl_elong_EFTu/EF1A_bac/org"/>
</dbReference>
<dbReference type="InterPro" id="IPR004160">
    <property type="entry name" value="Transl_elong_EFTu/EF1A_C"/>
</dbReference>
<dbReference type="NCBIfam" id="TIGR00485">
    <property type="entry name" value="EF-Tu"/>
    <property type="match status" value="1"/>
</dbReference>
<dbReference type="NCBIfam" id="NF000766">
    <property type="entry name" value="PRK00049.1"/>
    <property type="match status" value="1"/>
</dbReference>
<dbReference type="NCBIfam" id="NF009372">
    <property type="entry name" value="PRK12735.1"/>
    <property type="match status" value="1"/>
</dbReference>
<dbReference type="NCBIfam" id="NF009373">
    <property type="entry name" value="PRK12736.1"/>
    <property type="match status" value="1"/>
</dbReference>
<dbReference type="NCBIfam" id="TIGR00231">
    <property type="entry name" value="small_GTP"/>
    <property type="match status" value="1"/>
</dbReference>
<dbReference type="PANTHER" id="PTHR43721:SF22">
    <property type="entry name" value="ELONGATION FACTOR TU, MITOCHONDRIAL"/>
    <property type="match status" value="1"/>
</dbReference>
<dbReference type="PANTHER" id="PTHR43721">
    <property type="entry name" value="ELONGATION FACTOR TU-RELATED"/>
    <property type="match status" value="1"/>
</dbReference>
<dbReference type="Pfam" id="PF00009">
    <property type="entry name" value="GTP_EFTU"/>
    <property type="match status" value="1"/>
</dbReference>
<dbReference type="Pfam" id="PF03144">
    <property type="entry name" value="GTP_EFTU_D2"/>
    <property type="match status" value="1"/>
</dbReference>
<dbReference type="Pfam" id="PF03143">
    <property type="entry name" value="GTP_EFTU_D3"/>
    <property type="match status" value="1"/>
</dbReference>
<dbReference type="PRINTS" id="PR00315">
    <property type="entry name" value="ELONGATNFCT"/>
</dbReference>
<dbReference type="SUPFAM" id="SSF50465">
    <property type="entry name" value="EF-Tu/eEF-1alpha/eIF2-gamma C-terminal domain"/>
    <property type="match status" value="1"/>
</dbReference>
<dbReference type="SUPFAM" id="SSF52540">
    <property type="entry name" value="P-loop containing nucleoside triphosphate hydrolases"/>
    <property type="match status" value="1"/>
</dbReference>
<dbReference type="SUPFAM" id="SSF50447">
    <property type="entry name" value="Translation proteins"/>
    <property type="match status" value="1"/>
</dbReference>
<dbReference type="PROSITE" id="PS00301">
    <property type="entry name" value="G_TR_1"/>
    <property type="match status" value="1"/>
</dbReference>
<dbReference type="PROSITE" id="PS51722">
    <property type="entry name" value="G_TR_2"/>
    <property type="match status" value="1"/>
</dbReference>
<reference key="1">
    <citation type="journal article" date="2007" name="PLoS ONE">
        <title>A glimpse of streptococcal toxic shock syndrome from comparative genomics of S. suis 2 Chinese isolates.</title>
        <authorList>
            <person name="Chen C."/>
            <person name="Tang J."/>
            <person name="Dong W."/>
            <person name="Wang C."/>
            <person name="Feng Y."/>
            <person name="Wang J."/>
            <person name="Zheng F."/>
            <person name="Pan X."/>
            <person name="Liu D."/>
            <person name="Li M."/>
            <person name="Song Y."/>
            <person name="Zhu X."/>
            <person name="Sun H."/>
            <person name="Feng T."/>
            <person name="Guo Z."/>
            <person name="Ju A."/>
            <person name="Ge J."/>
            <person name="Dong Y."/>
            <person name="Sun W."/>
            <person name="Jiang Y."/>
            <person name="Wang J."/>
            <person name="Yan J."/>
            <person name="Yang H."/>
            <person name="Wang X."/>
            <person name="Gao G.F."/>
            <person name="Yang R."/>
            <person name="Wang J."/>
            <person name="Yu J."/>
        </authorList>
    </citation>
    <scope>NUCLEOTIDE SEQUENCE [LARGE SCALE GENOMIC DNA]</scope>
    <source>
        <strain>05ZYH33</strain>
    </source>
</reference>
<sequence length="398" mass="44047">MAKEKYDRSKPHVNIGTIGHVDHGKTTLTAAITTVLARRLPSSVNQPKDYASIDAAPEERERGITINTAHVEYETEKRHYAHIDAPGHADYVKNMITGAAQMDGAILVVASTDGPMPQTREHILLSRQVGVKHLIVFMNKVDLVDDEELLELVEMEIRDLLSEYDFPGDDLPVIQGSALKALEGDSKYEDIVMELMNTVDEYIPEPERDTDKPLLLPVEDVFSITGRGTVASGRIDRGTVRVNDEIEIVGLQEEKSKAVVTGVEMFRKQLDEGLAGDNVGVLLRGVQRDEIERGQVISKPGSINPHTKFKGEVYILTKEEGGRHTPFFDNYRPQFYFRTTDVTGSIKLPEGTEMVMPGDNVTIDVELIHPIAVEQGTTFSIREGGRTVGSGMVTEIEA</sequence>
<organism>
    <name type="scientific">Streptococcus suis (strain 05ZYH33)</name>
    <dbReference type="NCBI Taxonomy" id="391295"/>
    <lineage>
        <taxon>Bacteria</taxon>
        <taxon>Bacillati</taxon>
        <taxon>Bacillota</taxon>
        <taxon>Bacilli</taxon>
        <taxon>Lactobacillales</taxon>
        <taxon>Streptococcaceae</taxon>
        <taxon>Streptococcus</taxon>
    </lineage>
</organism>
<keyword id="KW-0963">Cytoplasm</keyword>
<keyword id="KW-0251">Elongation factor</keyword>
<keyword id="KW-0342">GTP-binding</keyword>
<keyword id="KW-0378">Hydrolase</keyword>
<keyword id="KW-0460">Magnesium</keyword>
<keyword id="KW-0479">Metal-binding</keyword>
<keyword id="KW-0547">Nucleotide-binding</keyword>
<keyword id="KW-0648">Protein biosynthesis</keyword>